<protein>
    <recommendedName>
        <fullName>Methicillin resistance mecR1 protein</fullName>
    </recommendedName>
</protein>
<dbReference type="EMBL" id="X54660">
    <property type="protein sequence ID" value="CAA38470.1"/>
    <property type="molecule type" value="Genomic_DNA"/>
</dbReference>
<dbReference type="PIR" id="S18044">
    <property type="entry name" value="BWSAM1"/>
</dbReference>
<dbReference type="RefSeq" id="WP_000952923.1">
    <property type="nucleotide sequence ID" value="NZ_VEDU01000036.1"/>
</dbReference>
<dbReference type="SMR" id="P0A0B2"/>
<dbReference type="CARD" id="ARO:3000215">
    <property type="molecule name" value="mecR1"/>
    <property type="mechanism identifier" value="ARO:0001002"/>
    <property type="mechanism name" value="antibiotic target replacement"/>
</dbReference>
<dbReference type="MEROPS" id="M56.002"/>
<dbReference type="OMA" id="TEMEISC"/>
<dbReference type="GO" id="GO:0008658">
    <property type="term" value="F:penicillin binding"/>
    <property type="evidence" value="ECO:0007669"/>
    <property type="project" value="InterPro"/>
</dbReference>
<dbReference type="GO" id="GO:0046677">
    <property type="term" value="P:response to antibiotic"/>
    <property type="evidence" value="ECO:0007669"/>
    <property type="project" value="UniProtKB-KW"/>
</dbReference>
<dbReference type="CDD" id="cd07341">
    <property type="entry name" value="M56_BlaR1_MecR1_like"/>
    <property type="match status" value="1"/>
</dbReference>
<dbReference type="Gene3D" id="3.40.710.10">
    <property type="entry name" value="DD-peptidase/beta-lactamase superfamily"/>
    <property type="match status" value="1"/>
</dbReference>
<dbReference type="Gene3D" id="3.30.2010.10">
    <property type="entry name" value="Metalloproteases ('zincins'), catalytic domain"/>
    <property type="match status" value="1"/>
</dbReference>
<dbReference type="InterPro" id="IPR012338">
    <property type="entry name" value="Beta-lactam/transpept-like"/>
</dbReference>
<dbReference type="InterPro" id="IPR052173">
    <property type="entry name" value="Beta-lactam_resp_regulator"/>
</dbReference>
<dbReference type="InterPro" id="IPR001460">
    <property type="entry name" value="PCN-bd_Tpept"/>
</dbReference>
<dbReference type="InterPro" id="IPR008756">
    <property type="entry name" value="Peptidase_M56"/>
</dbReference>
<dbReference type="NCBIfam" id="NF000326">
    <property type="entry name" value="blaR1_generic"/>
    <property type="match status" value="1"/>
</dbReference>
<dbReference type="NCBIfam" id="NF033109">
    <property type="entry name" value="sensor_MecR1"/>
    <property type="match status" value="1"/>
</dbReference>
<dbReference type="PANTHER" id="PTHR34978">
    <property type="entry name" value="POSSIBLE SENSOR-TRANSDUCER PROTEIN BLAR"/>
    <property type="match status" value="1"/>
</dbReference>
<dbReference type="PANTHER" id="PTHR34978:SF3">
    <property type="entry name" value="SLR0241 PROTEIN"/>
    <property type="match status" value="1"/>
</dbReference>
<dbReference type="Pfam" id="PF05569">
    <property type="entry name" value="Peptidase_M56"/>
    <property type="match status" value="1"/>
</dbReference>
<dbReference type="Pfam" id="PF00905">
    <property type="entry name" value="Transpeptidase"/>
    <property type="match status" value="1"/>
</dbReference>
<dbReference type="SUPFAM" id="SSF56601">
    <property type="entry name" value="beta-lactamase/transpeptidase-like"/>
    <property type="match status" value="1"/>
</dbReference>
<comment type="function">
    <text evidence="1">Penicillin-interactive protein and potential antirepressor.</text>
</comment>
<comment type="similarity">
    <text evidence="2">Belongs to the peptidase M56 family.</text>
</comment>
<evidence type="ECO:0000250" key="1"/>
<evidence type="ECO:0000305" key="2"/>
<reference key="1">
    <citation type="submission" date="1990-08" db="EMBL/GenBank/DDBJ databases">
        <title>Nucleotide sequence of the methicillin resistance regulatory locus mecR of Staphylococcus epidermidis.</title>
        <authorList>
            <person name="Ryffel C."/>
            <person name="Tesch W."/>
            <person name="Kayser F.H."/>
            <person name="Berger-Baechi B."/>
        </authorList>
    </citation>
    <scope>NUCLEOTIDE SEQUENCE [GENOMIC DNA]</scope>
    <source>
        <strain>WT55</strain>
    </source>
</reference>
<organism>
    <name type="scientific">Staphylococcus epidermidis</name>
    <dbReference type="NCBI Taxonomy" id="1282"/>
    <lineage>
        <taxon>Bacteria</taxon>
        <taxon>Bacillati</taxon>
        <taxon>Bacillota</taxon>
        <taxon>Bacilli</taxon>
        <taxon>Bacillales</taxon>
        <taxon>Staphylococcaceae</taxon>
        <taxon>Staphylococcus</taxon>
    </lineage>
</organism>
<feature type="chain" id="PRO_0000096352" description="Methicillin resistance mecR1 protein">
    <location>
        <begin position="1"/>
        <end position="585"/>
    </location>
</feature>
<feature type="region of interest" description="Beta-lactamase-like">
    <location>
        <begin position="351"/>
        <end position="585"/>
    </location>
</feature>
<accession>P0A0B2</accession>
<accession>P26597</accession>
<accession>P72353</accession>
<sequence length="585" mass="68503">MLSSFLMLSIISSLLTICVIFLVRMLYIKYTQNIMSHKIWLLVLVSTLIPLIPFYKISNFTFSKDMMNRNVSDTTSSVSHMLDGQQSSVTKDLAINVNQFETSNITYMILLIWVFGSLLCLFYMIKAFRQIDVIKSSSLESSYLNERLKVCQSKMQFYKKHITISYSSNIDNPMVFGLVKSQIVLPTVVVETMNDKEIEYIILHELSHVKSHDLIFNQLYVVFKMIFWFNPALYISKTMMDNDCEKVCDRNVLKILNRHEHIRYGESILKCSILKSQHINNVAAQYLLGFNSNIKERVKYIALYDSMPKPNRNKRIVAYIVCSISLLIQAPLLSAHVQQDKYETNVSYKKLNQLAPYFKGFDGSFVLYNEREQAYSIYNEPESKQRYSPNSTYKIYLALMAFDQNLLSLNHTEQQWDKHQYPFKEWNQDQNLNSSMKYSVNWYYENLNKHLRQDEVKSYLDLIEYGNEEISGNENYWNESSLKISAIEQVNLLKNMKQHNMHFDNKAIEKVENSMTLKQKDTYKYVGKTGTGIVNHKEANGWFVGYVETKDNTYYFATHLKGEDNANGEKAQQISERILKEMELI</sequence>
<keyword id="KW-0046">Antibiotic resistance</keyword>
<proteinExistence type="inferred from homology"/>
<name>MECR_STAEP</name>
<gene>
    <name type="primary">mecR1</name>
    <name type="synonym">mecR</name>
</gene>